<dbReference type="EC" id="1.1.1.37" evidence="1"/>
<dbReference type="EMBL" id="AE003849">
    <property type="protein sequence ID" value="AAF84021.1"/>
    <property type="status" value="ALT_INIT"/>
    <property type="molecule type" value="Genomic_DNA"/>
</dbReference>
<dbReference type="PIR" id="G82708">
    <property type="entry name" value="G82708"/>
</dbReference>
<dbReference type="RefSeq" id="WP_031336891.1">
    <property type="nucleotide sequence ID" value="NC_002488.3"/>
</dbReference>
<dbReference type="SMR" id="Q9PE17"/>
<dbReference type="STRING" id="160492.XF_1211"/>
<dbReference type="KEGG" id="xfa:XF_1211"/>
<dbReference type="eggNOG" id="COG0039">
    <property type="taxonomic scope" value="Bacteria"/>
</dbReference>
<dbReference type="HOGENOM" id="CLU_040727_2_0_6"/>
<dbReference type="Proteomes" id="UP000000812">
    <property type="component" value="Chromosome"/>
</dbReference>
<dbReference type="GO" id="GO:0030060">
    <property type="term" value="F:L-malate dehydrogenase (NAD+) activity"/>
    <property type="evidence" value="ECO:0007669"/>
    <property type="project" value="UniProtKB-UniRule"/>
</dbReference>
<dbReference type="GO" id="GO:0006108">
    <property type="term" value="P:malate metabolic process"/>
    <property type="evidence" value="ECO:0007669"/>
    <property type="project" value="InterPro"/>
</dbReference>
<dbReference type="GO" id="GO:0006099">
    <property type="term" value="P:tricarboxylic acid cycle"/>
    <property type="evidence" value="ECO:0007669"/>
    <property type="project" value="UniProtKB-UniRule"/>
</dbReference>
<dbReference type="CDD" id="cd01338">
    <property type="entry name" value="MDH_chloroplast-like"/>
    <property type="match status" value="1"/>
</dbReference>
<dbReference type="FunFam" id="3.40.50.720:FF:000010">
    <property type="entry name" value="Malate dehydrogenase"/>
    <property type="match status" value="1"/>
</dbReference>
<dbReference type="FunFam" id="3.90.110.10:FF:000002">
    <property type="entry name" value="Malate dehydrogenase"/>
    <property type="match status" value="1"/>
</dbReference>
<dbReference type="Gene3D" id="3.90.110.10">
    <property type="entry name" value="Lactate dehydrogenase/glycoside hydrolase, family 4, C-terminal"/>
    <property type="match status" value="1"/>
</dbReference>
<dbReference type="Gene3D" id="3.40.50.720">
    <property type="entry name" value="NAD(P)-binding Rossmann-like Domain"/>
    <property type="match status" value="1"/>
</dbReference>
<dbReference type="HAMAP" id="MF_01517">
    <property type="entry name" value="Malate_dehydrog_2"/>
    <property type="match status" value="1"/>
</dbReference>
<dbReference type="InterPro" id="IPR001557">
    <property type="entry name" value="L-lactate/malate_DH"/>
</dbReference>
<dbReference type="InterPro" id="IPR022383">
    <property type="entry name" value="Lactate/malate_DH_C"/>
</dbReference>
<dbReference type="InterPro" id="IPR001236">
    <property type="entry name" value="Lactate/malate_DH_N"/>
</dbReference>
<dbReference type="InterPro" id="IPR015955">
    <property type="entry name" value="Lactate_DH/Glyco_Ohase_4_C"/>
</dbReference>
<dbReference type="InterPro" id="IPR010945">
    <property type="entry name" value="Malate_DH_type2"/>
</dbReference>
<dbReference type="InterPro" id="IPR036291">
    <property type="entry name" value="NAD(P)-bd_dom_sf"/>
</dbReference>
<dbReference type="NCBIfam" id="TIGR01759">
    <property type="entry name" value="MalateDH-SF1"/>
    <property type="match status" value="1"/>
</dbReference>
<dbReference type="NCBIfam" id="NF003916">
    <property type="entry name" value="PRK05442.1"/>
    <property type="match status" value="1"/>
</dbReference>
<dbReference type="PANTHER" id="PTHR23382">
    <property type="entry name" value="MALATE DEHYDROGENASE"/>
    <property type="match status" value="1"/>
</dbReference>
<dbReference type="Pfam" id="PF02866">
    <property type="entry name" value="Ldh_1_C"/>
    <property type="match status" value="1"/>
</dbReference>
<dbReference type="Pfam" id="PF00056">
    <property type="entry name" value="Ldh_1_N"/>
    <property type="match status" value="1"/>
</dbReference>
<dbReference type="PIRSF" id="PIRSF000102">
    <property type="entry name" value="Lac_mal_DH"/>
    <property type="match status" value="1"/>
</dbReference>
<dbReference type="SUPFAM" id="SSF56327">
    <property type="entry name" value="LDH C-terminal domain-like"/>
    <property type="match status" value="1"/>
</dbReference>
<dbReference type="SUPFAM" id="SSF51735">
    <property type="entry name" value="NAD(P)-binding Rossmann-fold domains"/>
    <property type="match status" value="1"/>
</dbReference>
<evidence type="ECO:0000255" key="1">
    <source>
        <dbReference type="HAMAP-Rule" id="MF_01517"/>
    </source>
</evidence>
<evidence type="ECO:0000305" key="2"/>
<protein>
    <recommendedName>
        <fullName evidence="1">Malate dehydrogenase</fullName>
        <ecNumber evidence="1">1.1.1.37</ecNumber>
    </recommendedName>
</protein>
<proteinExistence type="inferred from homology"/>
<accession>Q9PE17</accession>
<feature type="chain" id="PRO_0000113406" description="Malate dehydrogenase">
    <location>
        <begin position="1"/>
        <end position="328"/>
    </location>
</feature>
<feature type="active site" description="Proton acceptor" evidence="1">
    <location>
        <position position="189"/>
    </location>
</feature>
<feature type="binding site" evidence="1">
    <location>
        <begin position="11"/>
        <end position="17"/>
    </location>
    <ligand>
        <name>NAD(+)</name>
        <dbReference type="ChEBI" id="CHEBI:57540"/>
    </ligand>
</feature>
<feature type="binding site" evidence="1">
    <location>
        <position position="94"/>
    </location>
    <ligand>
        <name>substrate</name>
    </ligand>
</feature>
<feature type="binding site" evidence="1">
    <location>
        <position position="100"/>
    </location>
    <ligand>
        <name>substrate</name>
    </ligand>
</feature>
<feature type="binding site" evidence="1">
    <location>
        <position position="107"/>
    </location>
    <ligand>
        <name>NAD(+)</name>
        <dbReference type="ChEBI" id="CHEBI:57540"/>
    </ligand>
</feature>
<feature type="binding site" evidence="1">
    <location>
        <position position="114"/>
    </location>
    <ligand>
        <name>NAD(+)</name>
        <dbReference type="ChEBI" id="CHEBI:57540"/>
    </ligand>
</feature>
<feature type="binding site" evidence="1">
    <location>
        <begin position="131"/>
        <end position="133"/>
    </location>
    <ligand>
        <name>NAD(+)</name>
        <dbReference type="ChEBI" id="CHEBI:57540"/>
    </ligand>
</feature>
<feature type="binding site" evidence="1">
    <location>
        <position position="133"/>
    </location>
    <ligand>
        <name>substrate</name>
    </ligand>
</feature>
<feature type="binding site" evidence="1">
    <location>
        <position position="164"/>
    </location>
    <ligand>
        <name>substrate</name>
    </ligand>
</feature>
<reference key="1">
    <citation type="journal article" date="2000" name="Nature">
        <title>The genome sequence of the plant pathogen Xylella fastidiosa.</title>
        <authorList>
            <person name="Simpson A.J.G."/>
            <person name="Reinach F.C."/>
            <person name="Arruda P."/>
            <person name="Abreu F.A."/>
            <person name="Acencio M."/>
            <person name="Alvarenga R."/>
            <person name="Alves L.M.C."/>
            <person name="Araya J.E."/>
            <person name="Baia G.S."/>
            <person name="Baptista C.S."/>
            <person name="Barros M.H."/>
            <person name="Bonaccorsi E.D."/>
            <person name="Bordin S."/>
            <person name="Bove J.M."/>
            <person name="Briones M.R.S."/>
            <person name="Bueno M.R.P."/>
            <person name="Camargo A.A."/>
            <person name="Camargo L.E.A."/>
            <person name="Carraro D.M."/>
            <person name="Carrer H."/>
            <person name="Colauto N.B."/>
            <person name="Colombo C."/>
            <person name="Costa F.F."/>
            <person name="Costa M.C.R."/>
            <person name="Costa-Neto C.M."/>
            <person name="Coutinho L.L."/>
            <person name="Cristofani M."/>
            <person name="Dias-Neto E."/>
            <person name="Docena C."/>
            <person name="El-Dorry H."/>
            <person name="Facincani A.P."/>
            <person name="Ferreira A.J.S."/>
            <person name="Ferreira V.C.A."/>
            <person name="Ferro J.A."/>
            <person name="Fraga J.S."/>
            <person name="Franca S.C."/>
            <person name="Franco M.C."/>
            <person name="Frohme M."/>
            <person name="Furlan L.R."/>
            <person name="Garnier M."/>
            <person name="Goldman G.H."/>
            <person name="Goldman M.H.S."/>
            <person name="Gomes S.L."/>
            <person name="Gruber A."/>
            <person name="Ho P.L."/>
            <person name="Hoheisel J.D."/>
            <person name="Junqueira M.L."/>
            <person name="Kemper E.L."/>
            <person name="Kitajima J.P."/>
            <person name="Krieger J.E."/>
            <person name="Kuramae E.E."/>
            <person name="Laigret F."/>
            <person name="Lambais M.R."/>
            <person name="Leite L.C.C."/>
            <person name="Lemos E.G.M."/>
            <person name="Lemos M.V.F."/>
            <person name="Lopes S.A."/>
            <person name="Lopes C.R."/>
            <person name="Machado J.A."/>
            <person name="Machado M.A."/>
            <person name="Madeira A.M.B.N."/>
            <person name="Madeira H.M.F."/>
            <person name="Marino C.L."/>
            <person name="Marques M.V."/>
            <person name="Martins E.A.L."/>
            <person name="Martins E.M.F."/>
            <person name="Matsukuma A.Y."/>
            <person name="Menck C.F.M."/>
            <person name="Miracca E.C."/>
            <person name="Miyaki C.Y."/>
            <person name="Monteiro-Vitorello C.B."/>
            <person name="Moon D.H."/>
            <person name="Nagai M.A."/>
            <person name="Nascimento A.L.T.O."/>
            <person name="Netto L.E.S."/>
            <person name="Nhani A. Jr."/>
            <person name="Nobrega F.G."/>
            <person name="Nunes L.R."/>
            <person name="Oliveira M.A."/>
            <person name="de Oliveira M.C."/>
            <person name="de Oliveira R.C."/>
            <person name="Palmieri D.A."/>
            <person name="Paris A."/>
            <person name="Peixoto B.R."/>
            <person name="Pereira G.A.G."/>
            <person name="Pereira H.A. Jr."/>
            <person name="Pesquero J.B."/>
            <person name="Quaggio R.B."/>
            <person name="Roberto P.G."/>
            <person name="Rodrigues V."/>
            <person name="de Rosa A.J.M."/>
            <person name="de Rosa V.E. Jr."/>
            <person name="de Sa R.G."/>
            <person name="Santelli R.V."/>
            <person name="Sawasaki H.E."/>
            <person name="da Silva A.C.R."/>
            <person name="da Silva A.M."/>
            <person name="da Silva F.R."/>
            <person name="Silva W.A. Jr."/>
            <person name="da Silveira J.F."/>
            <person name="Silvestri M.L.Z."/>
            <person name="Siqueira W.J."/>
            <person name="de Souza A.A."/>
            <person name="de Souza A.P."/>
            <person name="Terenzi M.F."/>
            <person name="Truffi D."/>
            <person name="Tsai S.M."/>
            <person name="Tsuhako M.H."/>
            <person name="Vallada H."/>
            <person name="Van Sluys M.A."/>
            <person name="Verjovski-Almeida S."/>
            <person name="Vettore A.L."/>
            <person name="Zago M.A."/>
            <person name="Zatz M."/>
            <person name="Meidanis J."/>
            <person name="Setubal J.C."/>
        </authorList>
    </citation>
    <scope>NUCLEOTIDE SEQUENCE [LARGE SCALE GENOMIC DNA]</scope>
    <source>
        <strain>9a5c</strain>
    </source>
</reference>
<sequence length="328" mass="35488">MKSLVRVAVTGAAGQIGYSLLFRIAAGEMFGKDRPVILQMLELPDEKAQAALKGVMMELEDCAFPLLAGMVGTDNPDIAFKDADVALLVGSRPRGPGMERKDLLMENAKIFTAQGAALNKVARRDVKVLVVGNPANTNAYIAMKSAPDLNPKHFTAMLRLDHNRALSQLSTKLSKPVANIEKLIVWGNHSPTMYPDYRFATADGTPIIEAINDQAWNANSFIPTVSKRGAAIIEVRGLSSAASAANAAIDHMRDWLLGSNGKWITMGVPSDGSYGIPEGMIFGFPVTTTNGEYSIVKDLPIDTFSKTYIDKTLAELEEERASIAHLLR</sequence>
<gene>
    <name evidence="1" type="primary">mdh</name>
    <name type="ordered locus">XF_1211</name>
</gene>
<organism>
    <name type="scientific">Xylella fastidiosa (strain 9a5c)</name>
    <dbReference type="NCBI Taxonomy" id="160492"/>
    <lineage>
        <taxon>Bacteria</taxon>
        <taxon>Pseudomonadati</taxon>
        <taxon>Pseudomonadota</taxon>
        <taxon>Gammaproteobacteria</taxon>
        <taxon>Lysobacterales</taxon>
        <taxon>Lysobacteraceae</taxon>
        <taxon>Xylella</taxon>
    </lineage>
</organism>
<comment type="function">
    <text evidence="1">Catalyzes the reversible oxidation of malate to oxaloacetate.</text>
</comment>
<comment type="catalytic activity">
    <reaction evidence="1">
        <text>(S)-malate + NAD(+) = oxaloacetate + NADH + H(+)</text>
        <dbReference type="Rhea" id="RHEA:21432"/>
        <dbReference type="ChEBI" id="CHEBI:15378"/>
        <dbReference type="ChEBI" id="CHEBI:15589"/>
        <dbReference type="ChEBI" id="CHEBI:16452"/>
        <dbReference type="ChEBI" id="CHEBI:57540"/>
        <dbReference type="ChEBI" id="CHEBI:57945"/>
        <dbReference type="EC" id="1.1.1.37"/>
    </reaction>
</comment>
<comment type="similarity">
    <text evidence="1">Belongs to the LDH/MDH superfamily. MDH type 2 family.</text>
</comment>
<comment type="sequence caution" evidence="2">
    <conflict type="erroneous initiation">
        <sequence resource="EMBL-CDS" id="AAF84021"/>
    </conflict>
</comment>
<name>MDH_XYLFA</name>
<keyword id="KW-0520">NAD</keyword>
<keyword id="KW-0560">Oxidoreductase</keyword>
<keyword id="KW-0816">Tricarboxylic acid cycle</keyword>